<proteinExistence type="inferred from homology"/>
<sequence>MKLPIYLDYSATTPVDPRVAEKMMQFMTMDGTFGNPASRSHRFGWQAEEAVDIARNQIADLVGADPREIVFTSGATESDNLAIKGAANFYQKKGKHIITSKTEHKAVLDTCRQLEREGFEVTYLAPQRNGIIDLKELEAAMRDDTILVSIMHVNNEIGVVQDIAAIGEMCRARGIIYHVDATQSVGKLPIDLSQLKVDLMSFSGHKIYGPKGIGALYVRRKPRVRIEAQMHGGGHERGMRSGTLPVHQIVGMGEAYRIAKEEMATEMERLRGLRNRLWNGIKDIEEVYLNGDLEHGAPNILNVSFNYVEGESLIMALKDLAVSSGSACTSASLEPSYVLRALGLNDELAHSSIRFSLGRFTTEEEIDYTIELVRKSIGRLRDLSPLWEMYKQGVDLNSIEWAHH</sequence>
<feature type="chain" id="PRO_0000150266" description="Cysteine desulfurase IscS">
    <location>
        <begin position="1"/>
        <end position="404"/>
    </location>
</feature>
<feature type="active site" description="Cysteine persulfide intermediate" evidence="1">
    <location>
        <position position="328"/>
    </location>
</feature>
<feature type="binding site" evidence="1">
    <location>
        <begin position="75"/>
        <end position="76"/>
    </location>
    <ligand>
        <name>pyridoxal 5'-phosphate</name>
        <dbReference type="ChEBI" id="CHEBI:597326"/>
    </ligand>
</feature>
<feature type="binding site" evidence="1">
    <location>
        <position position="155"/>
    </location>
    <ligand>
        <name>pyridoxal 5'-phosphate</name>
        <dbReference type="ChEBI" id="CHEBI:597326"/>
    </ligand>
</feature>
<feature type="binding site" evidence="1">
    <location>
        <position position="183"/>
    </location>
    <ligand>
        <name>pyridoxal 5'-phosphate</name>
        <dbReference type="ChEBI" id="CHEBI:597326"/>
    </ligand>
</feature>
<feature type="binding site" evidence="1">
    <location>
        <begin position="203"/>
        <end position="205"/>
    </location>
    <ligand>
        <name>pyridoxal 5'-phosphate</name>
        <dbReference type="ChEBI" id="CHEBI:597326"/>
    </ligand>
</feature>
<feature type="binding site" evidence="1">
    <location>
        <position position="243"/>
    </location>
    <ligand>
        <name>pyridoxal 5'-phosphate</name>
        <dbReference type="ChEBI" id="CHEBI:597326"/>
    </ligand>
</feature>
<feature type="binding site" description="via persulfide group" evidence="1">
    <location>
        <position position="328"/>
    </location>
    <ligand>
        <name>[2Fe-2S] cluster</name>
        <dbReference type="ChEBI" id="CHEBI:190135"/>
        <note>ligand shared with IscU</note>
    </ligand>
</feature>
<feature type="modified residue" description="N6-(pyridoxal phosphate)lysine" evidence="1">
    <location>
        <position position="206"/>
    </location>
</feature>
<reference key="1">
    <citation type="journal article" date="2002" name="Proc. Natl. Acad. Sci. U.S.A.">
        <title>Extensive mosaic structure revealed by the complete genome sequence of uropathogenic Escherichia coli.</title>
        <authorList>
            <person name="Welch R.A."/>
            <person name="Burland V."/>
            <person name="Plunkett G. III"/>
            <person name="Redford P."/>
            <person name="Roesch P."/>
            <person name="Rasko D."/>
            <person name="Buckles E.L."/>
            <person name="Liou S.-R."/>
            <person name="Boutin A."/>
            <person name="Hackett J."/>
            <person name="Stroud D."/>
            <person name="Mayhew G.F."/>
            <person name="Rose D.J."/>
            <person name="Zhou S."/>
            <person name="Schwartz D.C."/>
            <person name="Perna N.T."/>
            <person name="Mobley H.L.T."/>
            <person name="Donnenberg M.S."/>
            <person name="Blattner F.R."/>
        </authorList>
    </citation>
    <scope>NUCLEOTIDE SEQUENCE [LARGE SCALE GENOMIC DNA]</scope>
    <source>
        <strain>CFT073 / ATCC 700928 / UPEC</strain>
    </source>
</reference>
<gene>
    <name evidence="1" type="primary">iscS</name>
    <name type="ordered locus">c3056</name>
</gene>
<dbReference type="EC" id="2.8.1.7" evidence="1"/>
<dbReference type="EMBL" id="AE014075">
    <property type="protein sequence ID" value="AAN81506.1"/>
    <property type="status" value="ALT_INIT"/>
    <property type="molecule type" value="Genomic_DNA"/>
</dbReference>
<dbReference type="RefSeq" id="WP_001295373.1">
    <property type="nucleotide sequence ID" value="NZ_CP051263.1"/>
</dbReference>
<dbReference type="SMR" id="P0A6B8"/>
<dbReference type="STRING" id="199310.c3056"/>
<dbReference type="GeneID" id="93774606"/>
<dbReference type="KEGG" id="ecc:c3056"/>
<dbReference type="eggNOG" id="COG1104">
    <property type="taxonomic scope" value="Bacteria"/>
</dbReference>
<dbReference type="HOGENOM" id="CLU_003433_0_2_6"/>
<dbReference type="UniPathway" id="UPA00266"/>
<dbReference type="Proteomes" id="UP000001410">
    <property type="component" value="Chromosome"/>
</dbReference>
<dbReference type="GO" id="GO:1990221">
    <property type="term" value="C:L-cysteine desulfurase complex"/>
    <property type="evidence" value="ECO:0007669"/>
    <property type="project" value="UniProtKB-ARBA"/>
</dbReference>
<dbReference type="GO" id="GO:0051537">
    <property type="term" value="F:2 iron, 2 sulfur cluster binding"/>
    <property type="evidence" value="ECO:0007669"/>
    <property type="project" value="UniProtKB-UniRule"/>
</dbReference>
<dbReference type="GO" id="GO:0031071">
    <property type="term" value="F:cysteine desulfurase activity"/>
    <property type="evidence" value="ECO:0007669"/>
    <property type="project" value="UniProtKB-UniRule"/>
</dbReference>
<dbReference type="GO" id="GO:0046872">
    <property type="term" value="F:metal ion binding"/>
    <property type="evidence" value="ECO:0007669"/>
    <property type="project" value="UniProtKB-KW"/>
</dbReference>
<dbReference type="GO" id="GO:0030170">
    <property type="term" value="F:pyridoxal phosphate binding"/>
    <property type="evidence" value="ECO:0007669"/>
    <property type="project" value="UniProtKB-UniRule"/>
</dbReference>
<dbReference type="GO" id="GO:0044571">
    <property type="term" value="P:[2Fe-2S] cluster assembly"/>
    <property type="evidence" value="ECO:0007669"/>
    <property type="project" value="UniProtKB-UniRule"/>
</dbReference>
<dbReference type="FunFam" id="3.40.640.10:FF:000003">
    <property type="entry name" value="Cysteine desulfurase IscS"/>
    <property type="match status" value="1"/>
</dbReference>
<dbReference type="FunFam" id="3.90.1150.10:FF:000002">
    <property type="entry name" value="Cysteine desulfurase IscS"/>
    <property type="match status" value="1"/>
</dbReference>
<dbReference type="Gene3D" id="3.90.1150.10">
    <property type="entry name" value="Aspartate Aminotransferase, domain 1"/>
    <property type="match status" value="1"/>
</dbReference>
<dbReference type="Gene3D" id="3.40.640.10">
    <property type="entry name" value="Type I PLP-dependent aspartate aminotransferase-like (Major domain)"/>
    <property type="match status" value="1"/>
</dbReference>
<dbReference type="HAMAP" id="MF_00331">
    <property type="entry name" value="Cys_desulf_IscS"/>
    <property type="match status" value="1"/>
</dbReference>
<dbReference type="InterPro" id="IPR000192">
    <property type="entry name" value="Aminotrans_V_dom"/>
</dbReference>
<dbReference type="InterPro" id="IPR020578">
    <property type="entry name" value="Aminotrans_V_PyrdxlP_BS"/>
</dbReference>
<dbReference type="InterPro" id="IPR010240">
    <property type="entry name" value="Cys_deSase_IscS"/>
</dbReference>
<dbReference type="InterPro" id="IPR016454">
    <property type="entry name" value="Cysteine_dSase"/>
</dbReference>
<dbReference type="InterPro" id="IPR015424">
    <property type="entry name" value="PyrdxlP-dep_Trfase"/>
</dbReference>
<dbReference type="InterPro" id="IPR015421">
    <property type="entry name" value="PyrdxlP-dep_Trfase_major"/>
</dbReference>
<dbReference type="InterPro" id="IPR015422">
    <property type="entry name" value="PyrdxlP-dep_Trfase_small"/>
</dbReference>
<dbReference type="NCBIfam" id="TIGR02006">
    <property type="entry name" value="IscS"/>
    <property type="match status" value="1"/>
</dbReference>
<dbReference type="NCBIfam" id="NF002806">
    <property type="entry name" value="PRK02948.1"/>
    <property type="match status" value="1"/>
</dbReference>
<dbReference type="NCBIfam" id="NF010611">
    <property type="entry name" value="PRK14012.1"/>
    <property type="match status" value="1"/>
</dbReference>
<dbReference type="PANTHER" id="PTHR11601:SF34">
    <property type="entry name" value="CYSTEINE DESULFURASE"/>
    <property type="match status" value="1"/>
</dbReference>
<dbReference type="PANTHER" id="PTHR11601">
    <property type="entry name" value="CYSTEINE DESULFURYLASE FAMILY MEMBER"/>
    <property type="match status" value="1"/>
</dbReference>
<dbReference type="Pfam" id="PF00266">
    <property type="entry name" value="Aminotran_5"/>
    <property type="match status" value="1"/>
</dbReference>
<dbReference type="PIRSF" id="PIRSF005572">
    <property type="entry name" value="NifS"/>
    <property type="match status" value="1"/>
</dbReference>
<dbReference type="SUPFAM" id="SSF53383">
    <property type="entry name" value="PLP-dependent transferases"/>
    <property type="match status" value="1"/>
</dbReference>
<dbReference type="PROSITE" id="PS00595">
    <property type="entry name" value="AA_TRANSFER_CLASS_5"/>
    <property type="match status" value="1"/>
</dbReference>
<organism>
    <name type="scientific">Escherichia coli O6:H1 (strain CFT073 / ATCC 700928 / UPEC)</name>
    <dbReference type="NCBI Taxonomy" id="199310"/>
    <lineage>
        <taxon>Bacteria</taxon>
        <taxon>Pseudomonadati</taxon>
        <taxon>Pseudomonadota</taxon>
        <taxon>Gammaproteobacteria</taxon>
        <taxon>Enterobacterales</taxon>
        <taxon>Enterobacteriaceae</taxon>
        <taxon>Escherichia</taxon>
    </lineage>
</organism>
<protein>
    <recommendedName>
        <fullName evidence="1">Cysteine desulfurase IscS</fullName>
        <ecNumber evidence="1">2.8.1.7</ecNumber>
    </recommendedName>
</protein>
<comment type="function">
    <text evidence="1">Master enzyme that delivers sulfur to a number of partners involved in Fe-S cluster assembly, tRNA modification or cofactor biosynthesis. Catalyzes the removal of elemental sulfur and selenium atoms from cysteine and selenocysteine to produce alanine. Functions as a sulfur delivery protein for Fe-S cluster synthesis onto IscU, an Fe-S scaffold assembly protein, as well as other S acceptor proteins. Also functions as a selenium delivery protein in the pathway for the biosynthesis of selenophosphate.</text>
</comment>
<comment type="catalytic activity">
    <reaction evidence="1">
        <text>(sulfur carrier)-H + L-cysteine = (sulfur carrier)-SH + L-alanine</text>
        <dbReference type="Rhea" id="RHEA:43892"/>
        <dbReference type="Rhea" id="RHEA-COMP:14737"/>
        <dbReference type="Rhea" id="RHEA-COMP:14739"/>
        <dbReference type="ChEBI" id="CHEBI:29917"/>
        <dbReference type="ChEBI" id="CHEBI:35235"/>
        <dbReference type="ChEBI" id="CHEBI:57972"/>
        <dbReference type="ChEBI" id="CHEBI:64428"/>
        <dbReference type="EC" id="2.8.1.7"/>
    </reaction>
</comment>
<comment type="cofactor">
    <cofactor evidence="1">
        <name>pyridoxal 5'-phosphate</name>
        <dbReference type="ChEBI" id="CHEBI:597326"/>
    </cofactor>
</comment>
<comment type="pathway">
    <text evidence="1">Cofactor biosynthesis; iron-sulfur cluster biosynthesis.</text>
</comment>
<comment type="subunit">
    <text evidence="1">Homodimer. Forms a heterotetramer with IscU, interacts with other sulfur acceptors.</text>
</comment>
<comment type="subcellular location">
    <subcellularLocation>
        <location evidence="1">Cytoplasm</location>
    </subcellularLocation>
</comment>
<comment type="similarity">
    <text evidence="1">Belongs to the class-V pyridoxal-phosphate-dependent aminotransferase family. NifS/IscS subfamily.</text>
</comment>
<comment type="sequence caution" evidence="2">
    <conflict type="erroneous initiation">
        <sequence resource="EMBL-CDS" id="AAN81506"/>
    </conflict>
    <text>Extended N-terminus.</text>
</comment>
<name>ISCS_ECOL6</name>
<keyword id="KW-0001">2Fe-2S</keyword>
<keyword id="KW-0963">Cytoplasm</keyword>
<keyword id="KW-0408">Iron</keyword>
<keyword id="KW-0411">Iron-sulfur</keyword>
<keyword id="KW-0479">Metal-binding</keyword>
<keyword id="KW-0663">Pyridoxal phosphate</keyword>
<keyword id="KW-1185">Reference proteome</keyword>
<keyword id="KW-0808">Transferase</keyword>
<evidence type="ECO:0000255" key="1">
    <source>
        <dbReference type="HAMAP-Rule" id="MF_00331"/>
    </source>
</evidence>
<evidence type="ECO:0000305" key="2"/>
<accession>P0A6B8</accession>
<accession>P39171</accession>
<accession>P76581</accession>
<accession>P76992</accession>
<accession>Q8XA86</accession>